<protein>
    <recommendedName>
        <fullName>Probable methylated-DNA--protein-cysteine methyltransferase</fullName>
        <ecNumber>2.1.1.63</ecNumber>
    </recommendedName>
    <alternativeName>
        <fullName>6-O-methylguanine-DNA methyltransferase</fullName>
        <shortName>MGMT</shortName>
    </alternativeName>
    <alternativeName>
        <fullName>O-6-methylguanine-DNA-alkyltransferase</fullName>
    </alternativeName>
</protein>
<name>MGMT_MIMIV</name>
<proteinExistence type="inferred from homology"/>
<evidence type="ECO:0000250" key="1"/>
<evidence type="ECO:0000255" key="2">
    <source>
        <dbReference type="PROSITE-ProRule" id="PRU10017"/>
    </source>
</evidence>
<evidence type="ECO:0000305" key="3"/>
<gene>
    <name type="primary">MGMT</name>
    <name type="ordered locus">MIMI_R693</name>
</gene>
<feature type="chain" id="PRO_0000139363" description="Probable methylated-DNA--protein-cysteine methyltransferase">
    <location>
        <begin position="1"/>
        <end position="149"/>
    </location>
</feature>
<feature type="active site" description="Alkyl group acceptor" evidence="1">
    <location>
        <position position="118"/>
    </location>
</feature>
<sequence>MKIEIIETKIGLVKIIYDDTQTKIISVMFIDSSKIKPVKNSLSGLHKYFKGQNDYFTNLDLELKGTPFQRKVWKQILEIPFGETRTYSDIAMAIGNPKAVRAVANACGANPIAIIVPCHRVVGKNNDGGYEYGLEKKLWLLDFEKKNTQ</sequence>
<dbReference type="EC" id="2.1.1.63"/>
<dbReference type="EMBL" id="AY653733">
    <property type="protein sequence ID" value="AAV50954.1"/>
    <property type="molecule type" value="Genomic_DNA"/>
</dbReference>
<dbReference type="SMR" id="Q5UNU9"/>
<dbReference type="KEGG" id="vg:9925345"/>
<dbReference type="OrthoDB" id="36196at10239"/>
<dbReference type="Proteomes" id="UP000001134">
    <property type="component" value="Genome"/>
</dbReference>
<dbReference type="GO" id="GO:0003908">
    <property type="term" value="F:methylated-DNA-[protein]-cysteine S-methyltransferase activity"/>
    <property type="evidence" value="ECO:0007669"/>
    <property type="project" value="UniProtKB-EC"/>
</dbReference>
<dbReference type="GO" id="GO:0006281">
    <property type="term" value="P:DNA repair"/>
    <property type="evidence" value="ECO:0007669"/>
    <property type="project" value="UniProtKB-KW"/>
</dbReference>
<dbReference type="GO" id="GO:0032259">
    <property type="term" value="P:methylation"/>
    <property type="evidence" value="ECO:0007669"/>
    <property type="project" value="UniProtKB-KW"/>
</dbReference>
<dbReference type="CDD" id="cd06445">
    <property type="entry name" value="ATase"/>
    <property type="match status" value="1"/>
</dbReference>
<dbReference type="FunFam" id="1.10.10.10:FF:000214">
    <property type="entry name" value="Methylated-DNA--protein-cysteine methyltransferase"/>
    <property type="match status" value="1"/>
</dbReference>
<dbReference type="Gene3D" id="1.10.10.10">
    <property type="entry name" value="Winged helix-like DNA-binding domain superfamily/Winged helix DNA-binding domain"/>
    <property type="match status" value="1"/>
</dbReference>
<dbReference type="InterPro" id="IPR001497">
    <property type="entry name" value="MethylDNA_cys_MeTrfase_AS"/>
</dbReference>
<dbReference type="InterPro" id="IPR014048">
    <property type="entry name" value="MethylDNA_cys_MeTrfase_DNA-bd"/>
</dbReference>
<dbReference type="InterPro" id="IPR036217">
    <property type="entry name" value="MethylDNA_cys_MeTrfase_DNAb"/>
</dbReference>
<dbReference type="InterPro" id="IPR036631">
    <property type="entry name" value="MGMT_N_sf"/>
</dbReference>
<dbReference type="InterPro" id="IPR036388">
    <property type="entry name" value="WH-like_DNA-bd_sf"/>
</dbReference>
<dbReference type="NCBIfam" id="TIGR00589">
    <property type="entry name" value="ogt"/>
    <property type="match status" value="1"/>
</dbReference>
<dbReference type="PANTHER" id="PTHR10815">
    <property type="entry name" value="METHYLATED-DNA--PROTEIN-CYSTEINE METHYLTRANSFERASE"/>
    <property type="match status" value="1"/>
</dbReference>
<dbReference type="PANTHER" id="PTHR10815:SF13">
    <property type="entry name" value="METHYLATED-DNA--PROTEIN-CYSTEINE METHYLTRANSFERASE"/>
    <property type="match status" value="1"/>
</dbReference>
<dbReference type="Pfam" id="PF01035">
    <property type="entry name" value="DNA_binding_1"/>
    <property type="match status" value="1"/>
</dbReference>
<dbReference type="SUPFAM" id="SSF53155">
    <property type="entry name" value="Methylated DNA-protein cysteine methyltransferase domain"/>
    <property type="match status" value="1"/>
</dbReference>
<dbReference type="SUPFAM" id="SSF46767">
    <property type="entry name" value="Methylated DNA-protein cysteine methyltransferase, C-terminal domain"/>
    <property type="match status" value="1"/>
</dbReference>
<dbReference type="PROSITE" id="PS00374">
    <property type="entry name" value="MGMT"/>
    <property type="match status" value="1"/>
</dbReference>
<comment type="catalytic activity">
    <reaction evidence="2">
        <text>a 6-O-methyl-2'-deoxyguanosine in DNA + L-cysteinyl-[protein] = S-methyl-L-cysteinyl-[protein] + a 2'-deoxyguanosine in DNA</text>
        <dbReference type="Rhea" id="RHEA:24000"/>
        <dbReference type="Rhea" id="RHEA-COMP:10131"/>
        <dbReference type="Rhea" id="RHEA-COMP:10132"/>
        <dbReference type="Rhea" id="RHEA-COMP:11367"/>
        <dbReference type="Rhea" id="RHEA-COMP:11368"/>
        <dbReference type="ChEBI" id="CHEBI:29950"/>
        <dbReference type="ChEBI" id="CHEBI:82612"/>
        <dbReference type="ChEBI" id="CHEBI:85445"/>
        <dbReference type="ChEBI" id="CHEBI:85448"/>
        <dbReference type="EC" id="2.1.1.63"/>
    </reaction>
</comment>
<comment type="catalytic activity">
    <reaction evidence="2">
        <text>a 4-O-methyl-thymidine in DNA + L-cysteinyl-[protein] = a thymidine in DNA + S-methyl-L-cysteinyl-[protein]</text>
        <dbReference type="Rhea" id="RHEA:53428"/>
        <dbReference type="Rhea" id="RHEA-COMP:10131"/>
        <dbReference type="Rhea" id="RHEA-COMP:10132"/>
        <dbReference type="Rhea" id="RHEA-COMP:13555"/>
        <dbReference type="Rhea" id="RHEA-COMP:13556"/>
        <dbReference type="ChEBI" id="CHEBI:29950"/>
        <dbReference type="ChEBI" id="CHEBI:82612"/>
        <dbReference type="ChEBI" id="CHEBI:137386"/>
        <dbReference type="ChEBI" id="CHEBI:137387"/>
        <dbReference type="EC" id="2.1.1.63"/>
    </reaction>
</comment>
<comment type="miscellaneous">
    <text>This enzyme catalyzes only one turnover and therefore is not strictly catalytic. According to one definition, an enzyme is a biocatalyst that acts repeatedly and over many reaction cycles.</text>
</comment>
<comment type="similarity">
    <text evidence="3">Belongs to the MGMT family.</text>
</comment>
<keyword id="KW-0227">DNA damage</keyword>
<keyword id="KW-0234">DNA repair</keyword>
<keyword id="KW-0489">Methyltransferase</keyword>
<keyword id="KW-1185">Reference proteome</keyword>
<keyword id="KW-0808">Transferase</keyword>
<organismHost>
    <name type="scientific">Acanthamoeba polyphaga</name>
    <name type="common">Amoeba</name>
    <dbReference type="NCBI Taxonomy" id="5757"/>
</organismHost>
<accession>Q5UNU9</accession>
<organism>
    <name type="scientific">Acanthamoeba polyphaga mimivirus</name>
    <name type="common">APMV</name>
    <dbReference type="NCBI Taxonomy" id="212035"/>
    <lineage>
        <taxon>Viruses</taxon>
        <taxon>Varidnaviria</taxon>
        <taxon>Bamfordvirae</taxon>
        <taxon>Nucleocytoviricota</taxon>
        <taxon>Megaviricetes</taxon>
        <taxon>Imitervirales</taxon>
        <taxon>Mimiviridae</taxon>
        <taxon>Megamimivirinae</taxon>
        <taxon>Mimivirus</taxon>
        <taxon>Mimivirus bradfordmassiliense</taxon>
    </lineage>
</organism>
<reference key="1">
    <citation type="journal article" date="2004" name="Science">
        <title>The 1.2-megabase genome sequence of Mimivirus.</title>
        <authorList>
            <person name="Raoult D."/>
            <person name="Audic S."/>
            <person name="Robert C."/>
            <person name="Abergel C."/>
            <person name="Renesto P."/>
            <person name="Ogata H."/>
            <person name="La Scola B."/>
            <person name="Susan M."/>
            <person name="Claverie J.-M."/>
        </authorList>
    </citation>
    <scope>NUCLEOTIDE SEQUENCE [LARGE SCALE GENOMIC DNA]</scope>
    <source>
        <strain>Rowbotham-Bradford</strain>
    </source>
</reference>